<dbReference type="EC" id="2.1.1.207" evidence="1"/>
<dbReference type="EMBL" id="CP000413">
    <property type="protein sequence ID" value="ABJ60708.1"/>
    <property type="status" value="ALT_INIT"/>
    <property type="molecule type" value="Genomic_DNA"/>
</dbReference>
<dbReference type="RefSeq" id="WP_003646976.1">
    <property type="nucleotide sequence ID" value="NZ_WBMG01000003.1"/>
</dbReference>
<dbReference type="SMR" id="Q042B4"/>
<dbReference type="GeneID" id="29638844"/>
<dbReference type="KEGG" id="lga:LGAS_1346"/>
<dbReference type="HOGENOM" id="CLU_110125_0_0_9"/>
<dbReference type="BioCyc" id="LGAS324831:G1G6Y-1340-MONOMER"/>
<dbReference type="Proteomes" id="UP000000664">
    <property type="component" value="Chromosome"/>
</dbReference>
<dbReference type="GO" id="GO:0005737">
    <property type="term" value="C:cytoplasm"/>
    <property type="evidence" value="ECO:0007669"/>
    <property type="project" value="UniProtKB-SubCell"/>
</dbReference>
<dbReference type="GO" id="GO:0003723">
    <property type="term" value="F:RNA binding"/>
    <property type="evidence" value="ECO:0007669"/>
    <property type="project" value="InterPro"/>
</dbReference>
<dbReference type="GO" id="GO:0141102">
    <property type="term" value="F:tRNA (5-carboxymethylaminomethyluridine(34)-2'-O)-methyltransferase activity"/>
    <property type="evidence" value="ECO:0007669"/>
    <property type="project" value="RHEA"/>
</dbReference>
<dbReference type="GO" id="GO:0141098">
    <property type="term" value="F:tRNA (cytidine(34)-2'-O)-methyltransferase activity"/>
    <property type="evidence" value="ECO:0007669"/>
    <property type="project" value="RHEA"/>
</dbReference>
<dbReference type="GO" id="GO:0002130">
    <property type="term" value="P:wobble position ribose methylation"/>
    <property type="evidence" value="ECO:0007669"/>
    <property type="project" value="TreeGrafter"/>
</dbReference>
<dbReference type="CDD" id="cd18094">
    <property type="entry name" value="SpoU-like_TrmL"/>
    <property type="match status" value="1"/>
</dbReference>
<dbReference type="FunFam" id="3.40.1280.10:FF:000002">
    <property type="entry name" value="Peptidylprolyl isomerase"/>
    <property type="match status" value="1"/>
</dbReference>
<dbReference type="Gene3D" id="3.40.1280.10">
    <property type="match status" value="1"/>
</dbReference>
<dbReference type="HAMAP" id="MF_01885">
    <property type="entry name" value="tRNA_methyltr_TrmL"/>
    <property type="match status" value="1"/>
</dbReference>
<dbReference type="InterPro" id="IPR029028">
    <property type="entry name" value="Alpha/beta_knot_MTases"/>
</dbReference>
<dbReference type="InterPro" id="IPR001537">
    <property type="entry name" value="SpoU_MeTrfase"/>
</dbReference>
<dbReference type="InterPro" id="IPR016914">
    <property type="entry name" value="TrmL"/>
</dbReference>
<dbReference type="InterPro" id="IPR029026">
    <property type="entry name" value="tRNA_m1G_MTases_N"/>
</dbReference>
<dbReference type="PANTHER" id="PTHR42971">
    <property type="entry name" value="TRNA (CYTIDINE(34)-2'-O)-METHYLTRANSFERASE"/>
    <property type="match status" value="1"/>
</dbReference>
<dbReference type="PANTHER" id="PTHR42971:SF1">
    <property type="entry name" value="TRNA (CYTIDINE(34)-2'-O)-METHYLTRANSFERASE"/>
    <property type="match status" value="1"/>
</dbReference>
<dbReference type="Pfam" id="PF00588">
    <property type="entry name" value="SpoU_methylase"/>
    <property type="match status" value="1"/>
</dbReference>
<dbReference type="PIRSF" id="PIRSF029256">
    <property type="entry name" value="SpoU_TrmH_prd"/>
    <property type="match status" value="1"/>
</dbReference>
<dbReference type="SUPFAM" id="SSF75217">
    <property type="entry name" value="alpha/beta knot"/>
    <property type="match status" value="1"/>
</dbReference>
<protein>
    <recommendedName>
        <fullName>Putative RNA (cytidine(34)-2'-O)-methyltransferase</fullName>
        <ecNumber evidence="1">2.1.1.207</ecNumber>
    </recommendedName>
    <alternativeName>
        <fullName evidence="1">tRNA (cytidine/uridine-2'-O-)-methyltransferase</fullName>
    </alternativeName>
</protein>
<proteinExistence type="inferred from homology"/>
<comment type="function">
    <text evidence="1">Could methylate the ribose at the nucleotide 34 wobble position in tRNA.</text>
</comment>
<comment type="catalytic activity">
    <reaction evidence="1">
        <text>cytidine(34) in tRNA + S-adenosyl-L-methionine = 2'-O-methylcytidine(34) in tRNA + S-adenosyl-L-homocysteine + H(+)</text>
        <dbReference type="Rhea" id="RHEA:43084"/>
        <dbReference type="Rhea" id="RHEA-COMP:10331"/>
        <dbReference type="Rhea" id="RHEA-COMP:10332"/>
        <dbReference type="ChEBI" id="CHEBI:15378"/>
        <dbReference type="ChEBI" id="CHEBI:57856"/>
        <dbReference type="ChEBI" id="CHEBI:59789"/>
        <dbReference type="ChEBI" id="CHEBI:74495"/>
        <dbReference type="ChEBI" id="CHEBI:82748"/>
        <dbReference type="EC" id="2.1.1.207"/>
    </reaction>
</comment>
<comment type="catalytic activity">
    <reaction evidence="1">
        <text>5-carboxymethylaminomethyluridine(34) in tRNA(Leu) + S-adenosyl-L-methionine = 5-carboxymethylaminomethyl-2'-O-methyluridine(34) in tRNA(Leu) + S-adenosyl-L-homocysteine + H(+)</text>
        <dbReference type="Rhea" id="RHEA:43088"/>
        <dbReference type="Rhea" id="RHEA-COMP:10333"/>
        <dbReference type="Rhea" id="RHEA-COMP:10334"/>
        <dbReference type="ChEBI" id="CHEBI:15378"/>
        <dbReference type="ChEBI" id="CHEBI:57856"/>
        <dbReference type="ChEBI" id="CHEBI:59789"/>
        <dbReference type="ChEBI" id="CHEBI:74508"/>
        <dbReference type="ChEBI" id="CHEBI:74511"/>
        <dbReference type="EC" id="2.1.1.207"/>
    </reaction>
</comment>
<comment type="subcellular location">
    <subcellularLocation>
        <location evidence="1">Cytoplasm</location>
    </subcellularLocation>
</comment>
<comment type="similarity">
    <text evidence="1">Belongs to the class IV-like SAM-binding methyltransferase superfamily. RNA methyltransferase TrmH family. TrmL subfamily.</text>
</comment>
<comment type="sequence caution" evidence="2">
    <conflict type="erroneous initiation">
        <sequence resource="EMBL-CDS" id="ABJ60708"/>
    </conflict>
    <text>Extended N-terminus.</text>
</comment>
<gene>
    <name type="ordered locus">LGAS_1346</name>
</gene>
<sequence>MTNHVVLYEPLMPANTGNIARTCAGTNTILDLIEPLGFQIDNKKMKRAGLDYWDKVDIRMHDDLDAFLKTLGPNDEMYLISKFSSKNYAQVDYTDPNKDYYFVFGKETTGLPETFMREYYDRNLRIPMSDNIRCYNLSNSVAMVLLEALRQQGFPNMETSHHYENDKLKDNYNRPERYERNLGEN</sequence>
<feature type="chain" id="PRO_0000401946" description="Putative RNA (cytidine(34)-2'-O)-methyltransferase">
    <location>
        <begin position="1"/>
        <end position="185"/>
    </location>
</feature>
<feature type="binding site" evidence="1">
    <location>
        <position position="80"/>
    </location>
    <ligand>
        <name>S-adenosyl-L-methionine</name>
        <dbReference type="ChEBI" id="CHEBI:59789"/>
    </ligand>
</feature>
<feature type="binding site" evidence="1">
    <location>
        <position position="105"/>
    </location>
    <ligand>
        <name>S-adenosyl-L-methionine</name>
        <dbReference type="ChEBI" id="CHEBI:59789"/>
    </ligand>
</feature>
<feature type="binding site" evidence="1">
    <location>
        <position position="126"/>
    </location>
    <ligand>
        <name>S-adenosyl-L-methionine</name>
        <dbReference type="ChEBI" id="CHEBI:59789"/>
    </ligand>
</feature>
<organism>
    <name type="scientific">Lactobacillus gasseri (strain ATCC 33323 / DSM 20243 / BCRC 14619 / CIP 102991 / JCM 1131 / KCTC 3163 / NCIMB 11718 / NCTC 13722 / AM63)</name>
    <dbReference type="NCBI Taxonomy" id="324831"/>
    <lineage>
        <taxon>Bacteria</taxon>
        <taxon>Bacillati</taxon>
        <taxon>Bacillota</taxon>
        <taxon>Bacilli</taxon>
        <taxon>Lactobacillales</taxon>
        <taxon>Lactobacillaceae</taxon>
        <taxon>Lactobacillus</taxon>
    </lineage>
</organism>
<reference key="1">
    <citation type="journal article" date="2006" name="Proc. Natl. Acad. Sci. U.S.A.">
        <title>Comparative genomics of the lactic acid bacteria.</title>
        <authorList>
            <person name="Makarova K.S."/>
            <person name="Slesarev A."/>
            <person name="Wolf Y.I."/>
            <person name="Sorokin A."/>
            <person name="Mirkin B."/>
            <person name="Koonin E.V."/>
            <person name="Pavlov A."/>
            <person name="Pavlova N."/>
            <person name="Karamychev V."/>
            <person name="Polouchine N."/>
            <person name="Shakhova V."/>
            <person name="Grigoriev I."/>
            <person name="Lou Y."/>
            <person name="Rohksar D."/>
            <person name="Lucas S."/>
            <person name="Huang K."/>
            <person name="Goodstein D.M."/>
            <person name="Hawkins T."/>
            <person name="Plengvidhya V."/>
            <person name="Welker D."/>
            <person name="Hughes J."/>
            <person name="Goh Y."/>
            <person name="Benson A."/>
            <person name="Baldwin K."/>
            <person name="Lee J.-H."/>
            <person name="Diaz-Muniz I."/>
            <person name="Dosti B."/>
            <person name="Smeianov V."/>
            <person name="Wechter W."/>
            <person name="Barabote R."/>
            <person name="Lorca G."/>
            <person name="Altermann E."/>
            <person name="Barrangou R."/>
            <person name="Ganesan B."/>
            <person name="Xie Y."/>
            <person name="Rawsthorne H."/>
            <person name="Tamir D."/>
            <person name="Parker C."/>
            <person name="Breidt F."/>
            <person name="Broadbent J.R."/>
            <person name="Hutkins R."/>
            <person name="O'Sullivan D."/>
            <person name="Steele J."/>
            <person name="Unlu G."/>
            <person name="Saier M.H. Jr."/>
            <person name="Klaenhammer T."/>
            <person name="Richardson P."/>
            <person name="Kozyavkin S."/>
            <person name="Weimer B.C."/>
            <person name="Mills D.A."/>
        </authorList>
    </citation>
    <scope>NUCLEOTIDE SEQUENCE [LARGE SCALE GENOMIC DNA]</scope>
    <source>
        <strain>ATCC 33323 / DSM 20243 / BCRC 14619 / CIP 102991 / JCM 1131 / KCTC 3163 / NCIMB 11718 / NCTC 13722 / AM63</strain>
    </source>
</reference>
<evidence type="ECO:0000255" key="1">
    <source>
        <dbReference type="HAMAP-Rule" id="MF_01885"/>
    </source>
</evidence>
<evidence type="ECO:0000305" key="2"/>
<name>TRML_LACGA</name>
<keyword id="KW-0963">Cytoplasm</keyword>
<keyword id="KW-0489">Methyltransferase</keyword>
<keyword id="KW-0949">S-adenosyl-L-methionine</keyword>
<keyword id="KW-0808">Transferase</keyword>
<keyword id="KW-0819">tRNA processing</keyword>
<accession>Q042B4</accession>